<proteinExistence type="inferred from homology"/>
<sequence>MKYDHLLVRYGELTLKGSNRKKFVNQLRNNVNKSLKGLDGFVVKGKRDRMYIELEDHADINEITYRLSKIFGIKSISPVLKVEKTLEAMSAAAIKFAQQFEENSTFKIDVKRADKNFPMDTYELQRELGGAVLKHFDNISVNVKRPDHEIRVEVRLDAIYMYEEVVAGAGGLPVGTGGKTLLMLSGGIDSPVAGMEVMRRGVTIEAIHFHSPPFTSDQAKEKVIELTRILAERVGPIKLHIVPFTELQKQVNKVVHPRYTMTSTRRMMMRVADKLVHQIGALAIVNGENLGQVASQTLHSMYAINNVTSTPVLRPLLTYDKEEIIIKSKEIGTFETSIQPFEDCCTIFTPKNPVTEPNFDKVVQYESVFDFEEMINRAVENIETLEITSDYKTIKEQQTNQLINDFL</sequence>
<accession>Q2YTF0</accession>
<reference key="1">
    <citation type="journal article" date="2007" name="PLoS ONE">
        <title>Molecular correlates of host specialization in Staphylococcus aureus.</title>
        <authorList>
            <person name="Herron-Olson L."/>
            <person name="Fitzgerald J.R."/>
            <person name="Musser J.M."/>
            <person name="Kapur V."/>
        </authorList>
    </citation>
    <scope>NUCLEOTIDE SEQUENCE [LARGE SCALE GENOMIC DNA]</scope>
    <source>
        <strain>bovine RF122 / ET3-1</strain>
    </source>
</reference>
<comment type="function">
    <text evidence="1">Catalyzes the ATP-dependent transfer of a sulfur to tRNA to produce 4-thiouridine in position 8 of tRNAs, which functions as a near-UV photosensor. Also catalyzes the transfer of sulfur to the sulfur carrier protein ThiS, forming ThiS-thiocarboxylate. This is a step in the synthesis of thiazole, in the thiamine biosynthesis pathway. The sulfur is donated as persulfide by IscS.</text>
</comment>
<comment type="catalytic activity">
    <reaction evidence="1">
        <text>[ThiI sulfur-carrier protein]-S-sulfanyl-L-cysteine + a uridine in tRNA + 2 reduced [2Fe-2S]-[ferredoxin] + ATP + H(+) = [ThiI sulfur-carrier protein]-L-cysteine + a 4-thiouridine in tRNA + 2 oxidized [2Fe-2S]-[ferredoxin] + AMP + diphosphate</text>
        <dbReference type="Rhea" id="RHEA:24176"/>
        <dbReference type="Rhea" id="RHEA-COMP:10000"/>
        <dbReference type="Rhea" id="RHEA-COMP:10001"/>
        <dbReference type="Rhea" id="RHEA-COMP:13337"/>
        <dbReference type="Rhea" id="RHEA-COMP:13338"/>
        <dbReference type="Rhea" id="RHEA-COMP:13339"/>
        <dbReference type="Rhea" id="RHEA-COMP:13340"/>
        <dbReference type="ChEBI" id="CHEBI:15378"/>
        <dbReference type="ChEBI" id="CHEBI:29950"/>
        <dbReference type="ChEBI" id="CHEBI:30616"/>
        <dbReference type="ChEBI" id="CHEBI:33019"/>
        <dbReference type="ChEBI" id="CHEBI:33737"/>
        <dbReference type="ChEBI" id="CHEBI:33738"/>
        <dbReference type="ChEBI" id="CHEBI:61963"/>
        <dbReference type="ChEBI" id="CHEBI:65315"/>
        <dbReference type="ChEBI" id="CHEBI:136798"/>
        <dbReference type="ChEBI" id="CHEBI:456215"/>
        <dbReference type="EC" id="2.8.1.4"/>
    </reaction>
</comment>
<comment type="catalytic activity">
    <reaction evidence="1">
        <text>[ThiS sulfur-carrier protein]-C-terminal Gly-Gly-AMP + S-sulfanyl-L-cysteinyl-[cysteine desulfurase] + AH2 = [ThiS sulfur-carrier protein]-C-terminal-Gly-aminoethanethioate + L-cysteinyl-[cysteine desulfurase] + A + AMP + 2 H(+)</text>
        <dbReference type="Rhea" id="RHEA:43340"/>
        <dbReference type="Rhea" id="RHEA-COMP:12157"/>
        <dbReference type="Rhea" id="RHEA-COMP:12158"/>
        <dbReference type="Rhea" id="RHEA-COMP:12910"/>
        <dbReference type="Rhea" id="RHEA-COMP:19908"/>
        <dbReference type="ChEBI" id="CHEBI:13193"/>
        <dbReference type="ChEBI" id="CHEBI:15378"/>
        <dbReference type="ChEBI" id="CHEBI:17499"/>
        <dbReference type="ChEBI" id="CHEBI:29950"/>
        <dbReference type="ChEBI" id="CHEBI:61963"/>
        <dbReference type="ChEBI" id="CHEBI:90618"/>
        <dbReference type="ChEBI" id="CHEBI:232372"/>
        <dbReference type="ChEBI" id="CHEBI:456215"/>
    </reaction>
</comment>
<comment type="pathway">
    <text evidence="1">Cofactor biosynthesis; thiamine diphosphate biosynthesis.</text>
</comment>
<comment type="subcellular location">
    <subcellularLocation>
        <location evidence="1">Cytoplasm</location>
    </subcellularLocation>
</comment>
<comment type="similarity">
    <text evidence="1">Belongs to the ThiI family.</text>
</comment>
<protein>
    <recommendedName>
        <fullName evidence="1">Probable tRNA sulfurtransferase</fullName>
        <ecNumber evidence="1">2.8.1.4</ecNumber>
    </recommendedName>
    <alternativeName>
        <fullName evidence="1">Sulfur carrier protein ThiS sulfurtransferase</fullName>
    </alternativeName>
    <alternativeName>
        <fullName evidence="1">Thiamine biosynthesis protein ThiI</fullName>
    </alternativeName>
    <alternativeName>
        <fullName evidence="1">tRNA 4-thiouridine synthase</fullName>
    </alternativeName>
</protein>
<gene>
    <name evidence="1" type="primary">thiI</name>
    <name type="ordered locus">SAB1574c</name>
</gene>
<feature type="chain" id="PRO_1000074287" description="Probable tRNA sulfurtransferase">
    <location>
        <begin position="1"/>
        <end position="407"/>
    </location>
</feature>
<feature type="domain" description="THUMP" evidence="1">
    <location>
        <begin position="61"/>
        <end position="165"/>
    </location>
</feature>
<feature type="binding site" evidence="1">
    <location>
        <begin position="183"/>
        <end position="184"/>
    </location>
    <ligand>
        <name>ATP</name>
        <dbReference type="ChEBI" id="CHEBI:30616"/>
    </ligand>
</feature>
<feature type="binding site" evidence="1">
    <location>
        <begin position="208"/>
        <end position="209"/>
    </location>
    <ligand>
        <name>ATP</name>
        <dbReference type="ChEBI" id="CHEBI:30616"/>
    </ligand>
</feature>
<feature type="binding site" evidence="1">
    <location>
        <position position="265"/>
    </location>
    <ligand>
        <name>ATP</name>
        <dbReference type="ChEBI" id="CHEBI:30616"/>
    </ligand>
</feature>
<feature type="binding site" evidence="1">
    <location>
        <position position="287"/>
    </location>
    <ligand>
        <name>ATP</name>
        <dbReference type="ChEBI" id="CHEBI:30616"/>
    </ligand>
</feature>
<feature type="binding site" evidence="1">
    <location>
        <position position="296"/>
    </location>
    <ligand>
        <name>ATP</name>
        <dbReference type="ChEBI" id="CHEBI:30616"/>
    </ligand>
</feature>
<name>THII_STAAB</name>
<organism>
    <name type="scientific">Staphylococcus aureus (strain bovine RF122 / ET3-1)</name>
    <dbReference type="NCBI Taxonomy" id="273036"/>
    <lineage>
        <taxon>Bacteria</taxon>
        <taxon>Bacillati</taxon>
        <taxon>Bacillota</taxon>
        <taxon>Bacilli</taxon>
        <taxon>Bacillales</taxon>
        <taxon>Staphylococcaceae</taxon>
        <taxon>Staphylococcus</taxon>
    </lineage>
</organism>
<evidence type="ECO:0000255" key="1">
    <source>
        <dbReference type="HAMAP-Rule" id="MF_00021"/>
    </source>
</evidence>
<keyword id="KW-0067">ATP-binding</keyword>
<keyword id="KW-0963">Cytoplasm</keyword>
<keyword id="KW-0547">Nucleotide-binding</keyword>
<keyword id="KW-0694">RNA-binding</keyword>
<keyword id="KW-0784">Thiamine biosynthesis</keyword>
<keyword id="KW-0808">Transferase</keyword>
<keyword id="KW-0820">tRNA-binding</keyword>
<dbReference type="EC" id="2.8.1.4" evidence="1"/>
<dbReference type="EMBL" id="AJ938182">
    <property type="protein sequence ID" value="CAI81263.1"/>
    <property type="molecule type" value="Genomic_DNA"/>
</dbReference>
<dbReference type="RefSeq" id="WP_000872665.1">
    <property type="nucleotide sequence ID" value="NC_007622.1"/>
</dbReference>
<dbReference type="SMR" id="Q2YTF0"/>
<dbReference type="KEGG" id="sab:SAB1574c"/>
<dbReference type="HOGENOM" id="CLU_037952_4_0_9"/>
<dbReference type="UniPathway" id="UPA00060"/>
<dbReference type="GO" id="GO:0005829">
    <property type="term" value="C:cytosol"/>
    <property type="evidence" value="ECO:0007669"/>
    <property type="project" value="TreeGrafter"/>
</dbReference>
<dbReference type="GO" id="GO:0005524">
    <property type="term" value="F:ATP binding"/>
    <property type="evidence" value="ECO:0007669"/>
    <property type="project" value="UniProtKB-UniRule"/>
</dbReference>
<dbReference type="GO" id="GO:0004810">
    <property type="term" value="F:CCA tRNA nucleotidyltransferase activity"/>
    <property type="evidence" value="ECO:0007669"/>
    <property type="project" value="InterPro"/>
</dbReference>
<dbReference type="GO" id="GO:0000049">
    <property type="term" value="F:tRNA binding"/>
    <property type="evidence" value="ECO:0007669"/>
    <property type="project" value="UniProtKB-UniRule"/>
</dbReference>
<dbReference type="GO" id="GO:0140741">
    <property type="term" value="F:tRNA-uracil-4 sulfurtransferase activity"/>
    <property type="evidence" value="ECO:0007669"/>
    <property type="project" value="UniProtKB-EC"/>
</dbReference>
<dbReference type="GO" id="GO:0009228">
    <property type="term" value="P:thiamine biosynthetic process"/>
    <property type="evidence" value="ECO:0007669"/>
    <property type="project" value="UniProtKB-KW"/>
</dbReference>
<dbReference type="GO" id="GO:0009229">
    <property type="term" value="P:thiamine diphosphate biosynthetic process"/>
    <property type="evidence" value="ECO:0007669"/>
    <property type="project" value="UniProtKB-UniRule"/>
</dbReference>
<dbReference type="GO" id="GO:0052837">
    <property type="term" value="P:thiazole biosynthetic process"/>
    <property type="evidence" value="ECO:0007669"/>
    <property type="project" value="TreeGrafter"/>
</dbReference>
<dbReference type="GO" id="GO:0002937">
    <property type="term" value="P:tRNA 4-thiouridine biosynthesis"/>
    <property type="evidence" value="ECO:0007669"/>
    <property type="project" value="TreeGrafter"/>
</dbReference>
<dbReference type="CDD" id="cd01712">
    <property type="entry name" value="PPase_ThiI"/>
    <property type="match status" value="1"/>
</dbReference>
<dbReference type="CDD" id="cd11716">
    <property type="entry name" value="THUMP_ThiI"/>
    <property type="match status" value="1"/>
</dbReference>
<dbReference type="FunFam" id="3.30.2130.30:FF:000009">
    <property type="entry name" value="Probable tRNA sulfurtransferase"/>
    <property type="match status" value="1"/>
</dbReference>
<dbReference type="FunFam" id="3.40.50.620:FF:000053">
    <property type="entry name" value="Probable tRNA sulfurtransferase"/>
    <property type="match status" value="1"/>
</dbReference>
<dbReference type="Gene3D" id="3.30.2130.30">
    <property type="match status" value="1"/>
</dbReference>
<dbReference type="Gene3D" id="3.40.50.620">
    <property type="entry name" value="HUPs"/>
    <property type="match status" value="1"/>
</dbReference>
<dbReference type="HAMAP" id="MF_00021">
    <property type="entry name" value="ThiI"/>
    <property type="match status" value="1"/>
</dbReference>
<dbReference type="InterPro" id="IPR014729">
    <property type="entry name" value="Rossmann-like_a/b/a_fold"/>
</dbReference>
<dbReference type="InterPro" id="IPR020536">
    <property type="entry name" value="ThiI_AANH"/>
</dbReference>
<dbReference type="InterPro" id="IPR054173">
    <property type="entry name" value="ThiI_fer"/>
</dbReference>
<dbReference type="InterPro" id="IPR049961">
    <property type="entry name" value="ThiI_N"/>
</dbReference>
<dbReference type="InterPro" id="IPR004114">
    <property type="entry name" value="THUMP_dom"/>
</dbReference>
<dbReference type="InterPro" id="IPR049962">
    <property type="entry name" value="THUMP_ThiI"/>
</dbReference>
<dbReference type="InterPro" id="IPR003720">
    <property type="entry name" value="tRNA_STrfase"/>
</dbReference>
<dbReference type="InterPro" id="IPR050102">
    <property type="entry name" value="tRNA_sulfurtransferase_ThiI"/>
</dbReference>
<dbReference type="NCBIfam" id="TIGR00342">
    <property type="entry name" value="tRNA uracil 4-sulfurtransferase ThiI"/>
    <property type="match status" value="1"/>
</dbReference>
<dbReference type="PANTHER" id="PTHR43209">
    <property type="entry name" value="TRNA SULFURTRANSFERASE"/>
    <property type="match status" value="1"/>
</dbReference>
<dbReference type="PANTHER" id="PTHR43209:SF1">
    <property type="entry name" value="TRNA SULFURTRANSFERASE"/>
    <property type="match status" value="1"/>
</dbReference>
<dbReference type="Pfam" id="PF02568">
    <property type="entry name" value="ThiI"/>
    <property type="match status" value="1"/>
</dbReference>
<dbReference type="Pfam" id="PF22025">
    <property type="entry name" value="ThiI_fer"/>
    <property type="match status" value="1"/>
</dbReference>
<dbReference type="Pfam" id="PF02926">
    <property type="entry name" value="THUMP"/>
    <property type="match status" value="1"/>
</dbReference>
<dbReference type="SMART" id="SM00981">
    <property type="entry name" value="THUMP"/>
    <property type="match status" value="1"/>
</dbReference>
<dbReference type="SUPFAM" id="SSF52402">
    <property type="entry name" value="Adenine nucleotide alpha hydrolases-like"/>
    <property type="match status" value="1"/>
</dbReference>
<dbReference type="SUPFAM" id="SSF143437">
    <property type="entry name" value="THUMP domain-like"/>
    <property type="match status" value="1"/>
</dbReference>
<dbReference type="PROSITE" id="PS51165">
    <property type="entry name" value="THUMP"/>
    <property type="match status" value="1"/>
</dbReference>